<evidence type="ECO:0000255" key="1">
    <source>
        <dbReference type="HAMAP-Rule" id="MF_00031"/>
    </source>
</evidence>
<organism>
    <name type="scientific">Francisella tularensis subsp. holarctica (strain OSU18)</name>
    <dbReference type="NCBI Taxonomy" id="393011"/>
    <lineage>
        <taxon>Bacteria</taxon>
        <taxon>Pseudomonadati</taxon>
        <taxon>Pseudomonadota</taxon>
        <taxon>Gammaproteobacteria</taxon>
        <taxon>Thiotrichales</taxon>
        <taxon>Francisellaceae</taxon>
        <taxon>Francisella</taxon>
    </lineage>
</organism>
<comment type="function">
    <text evidence="1">The RuvA-RuvB-RuvC complex processes Holliday junction (HJ) DNA during genetic recombination and DNA repair, while the RuvA-RuvB complex plays an important role in the rescue of blocked DNA replication forks via replication fork reversal (RFR). RuvA specifically binds to HJ cruciform DNA, conferring on it an open structure. The RuvB hexamer acts as an ATP-dependent pump, pulling dsDNA into and through the RuvAB complex. HJ branch migration allows RuvC to scan DNA until it finds its consensus sequence, where it cleaves and resolves the cruciform DNA.</text>
</comment>
<comment type="subunit">
    <text evidence="1">Homotetramer. Forms an RuvA(8)-RuvB(12)-Holliday junction (HJ) complex. HJ DNA is sandwiched between 2 RuvA tetramers; dsDNA enters through RuvA and exits via RuvB. An RuvB hexamer assembles on each DNA strand where it exits the tetramer. Each RuvB hexamer is contacted by two RuvA subunits (via domain III) on 2 adjacent RuvB subunits; this complex drives branch migration. In the full resolvosome a probable DNA-RuvA(4)-RuvB(12)-RuvC(2) complex forms which resolves the HJ.</text>
</comment>
<comment type="subcellular location">
    <subcellularLocation>
        <location evidence="1">Cytoplasm</location>
    </subcellularLocation>
</comment>
<comment type="domain">
    <text evidence="1">Has three domains with a flexible linker between the domains II and III and assumes an 'L' shape. Domain III is highly mobile and contacts RuvB.</text>
</comment>
<comment type="similarity">
    <text evidence="1">Belongs to the RuvA family.</text>
</comment>
<dbReference type="EMBL" id="CP000437">
    <property type="protein sequence ID" value="ABI82821.1"/>
    <property type="molecule type" value="Genomic_DNA"/>
</dbReference>
<dbReference type="RefSeq" id="WP_003015706.1">
    <property type="nucleotide sequence ID" value="NC_017463.1"/>
</dbReference>
<dbReference type="SMR" id="Q0BM63"/>
<dbReference type="KEGG" id="fth:FTH_0911"/>
<dbReference type="GO" id="GO:0005737">
    <property type="term" value="C:cytoplasm"/>
    <property type="evidence" value="ECO:0007669"/>
    <property type="project" value="UniProtKB-SubCell"/>
</dbReference>
<dbReference type="GO" id="GO:0009379">
    <property type="term" value="C:Holliday junction helicase complex"/>
    <property type="evidence" value="ECO:0007669"/>
    <property type="project" value="InterPro"/>
</dbReference>
<dbReference type="GO" id="GO:0048476">
    <property type="term" value="C:Holliday junction resolvase complex"/>
    <property type="evidence" value="ECO:0007669"/>
    <property type="project" value="UniProtKB-UniRule"/>
</dbReference>
<dbReference type="GO" id="GO:0005524">
    <property type="term" value="F:ATP binding"/>
    <property type="evidence" value="ECO:0007669"/>
    <property type="project" value="InterPro"/>
</dbReference>
<dbReference type="GO" id="GO:0000400">
    <property type="term" value="F:four-way junction DNA binding"/>
    <property type="evidence" value="ECO:0007669"/>
    <property type="project" value="UniProtKB-UniRule"/>
</dbReference>
<dbReference type="GO" id="GO:0009378">
    <property type="term" value="F:four-way junction helicase activity"/>
    <property type="evidence" value="ECO:0007669"/>
    <property type="project" value="InterPro"/>
</dbReference>
<dbReference type="GO" id="GO:0006310">
    <property type="term" value="P:DNA recombination"/>
    <property type="evidence" value="ECO:0007669"/>
    <property type="project" value="UniProtKB-UniRule"/>
</dbReference>
<dbReference type="GO" id="GO:0006281">
    <property type="term" value="P:DNA repair"/>
    <property type="evidence" value="ECO:0007669"/>
    <property type="project" value="UniProtKB-UniRule"/>
</dbReference>
<dbReference type="CDD" id="cd14332">
    <property type="entry name" value="UBA_RuvA_C"/>
    <property type="match status" value="1"/>
</dbReference>
<dbReference type="Gene3D" id="1.10.150.20">
    <property type="entry name" value="5' to 3' exonuclease, C-terminal subdomain"/>
    <property type="match status" value="1"/>
</dbReference>
<dbReference type="Gene3D" id="1.10.8.10">
    <property type="entry name" value="DNA helicase RuvA subunit, C-terminal domain"/>
    <property type="match status" value="1"/>
</dbReference>
<dbReference type="Gene3D" id="2.40.50.140">
    <property type="entry name" value="Nucleic acid-binding proteins"/>
    <property type="match status" value="1"/>
</dbReference>
<dbReference type="HAMAP" id="MF_00031">
    <property type="entry name" value="DNA_HJ_migration_RuvA"/>
    <property type="match status" value="1"/>
</dbReference>
<dbReference type="InterPro" id="IPR013849">
    <property type="entry name" value="DNA_helicase_Holl-junc_RuvA_I"/>
</dbReference>
<dbReference type="InterPro" id="IPR003583">
    <property type="entry name" value="Hlx-hairpin-Hlx_DNA-bd_motif"/>
</dbReference>
<dbReference type="InterPro" id="IPR012340">
    <property type="entry name" value="NA-bd_OB-fold"/>
</dbReference>
<dbReference type="InterPro" id="IPR000085">
    <property type="entry name" value="RuvA"/>
</dbReference>
<dbReference type="InterPro" id="IPR010994">
    <property type="entry name" value="RuvA_2-like"/>
</dbReference>
<dbReference type="InterPro" id="IPR011114">
    <property type="entry name" value="RuvA_C"/>
</dbReference>
<dbReference type="InterPro" id="IPR036267">
    <property type="entry name" value="RuvA_C_sf"/>
</dbReference>
<dbReference type="NCBIfam" id="TIGR00084">
    <property type="entry name" value="ruvA"/>
    <property type="match status" value="1"/>
</dbReference>
<dbReference type="Pfam" id="PF14520">
    <property type="entry name" value="HHH_5"/>
    <property type="match status" value="1"/>
</dbReference>
<dbReference type="Pfam" id="PF07499">
    <property type="entry name" value="RuvA_C"/>
    <property type="match status" value="1"/>
</dbReference>
<dbReference type="Pfam" id="PF01330">
    <property type="entry name" value="RuvA_N"/>
    <property type="match status" value="1"/>
</dbReference>
<dbReference type="SMART" id="SM00278">
    <property type="entry name" value="HhH1"/>
    <property type="match status" value="2"/>
</dbReference>
<dbReference type="SUPFAM" id="SSF46929">
    <property type="entry name" value="DNA helicase RuvA subunit, C-terminal domain"/>
    <property type="match status" value="1"/>
</dbReference>
<dbReference type="SUPFAM" id="SSF50249">
    <property type="entry name" value="Nucleic acid-binding proteins"/>
    <property type="match status" value="1"/>
</dbReference>
<dbReference type="SUPFAM" id="SSF47781">
    <property type="entry name" value="RuvA domain 2-like"/>
    <property type="match status" value="1"/>
</dbReference>
<gene>
    <name evidence="1" type="primary">ruvA</name>
    <name type="ordered locus">FTH_0911</name>
</gene>
<keyword id="KW-0963">Cytoplasm</keyword>
<keyword id="KW-0227">DNA damage</keyword>
<keyword id="KW-0233">DNA recombination</keyword>
<keyword id="KW-0234">DNA repair</keyword>
<keyword id="KW-0238">DNA-binding</keyword>
<accession>Q0BM63</accession>
<protein>
    <recommendedName>
        <fullName evidence="1">Holliday junction branch migration complex subunit RuvA</fullName>
    </recommendedName>
</protein>
<proteinExistence type="inferred from homology"/>
<name>RUVA_FRATO</name>
<reference key="1">
    <citation type="journal article" date="2006" name="J. Bacteriol.">
        <title>Chromosome rearrangement and diversification of Francisella tularensis revealed by the type B (OSU18) genome sequence.</title>
        <authorList>
            <person name="Petrosino J.F."/>
            <person name="Xiang Q."/>
            <person name="Karpathy S.E."/>
            <person name="Jiang H."/>
            <person name="Yerrapragada S."/>
            <person name="Liu Y."/>
            <person name="Gioia J."/>
            <person name="Hemphill L."/>
            <person name="Gonzalez A."/>
            <person name="Raghavan T.M."/>
            <person name="Uzman A."/>
            <person name="Fox G.E."/>
            <person name="Highlander S."/>
            <person name="Reichard M."/>
            <person name="Morton R.J."/>
            <person name="Clinkenbeard K.D."/>
            <person name="Weinstock G.M."/>
        </authorList>
    </citation>
    <scope>NUCLEOTIDE SEQUENCE [LARGE SCALE GENOMIC DNA]</scope>
    <source>
        <strain>OSU18</strain>
    </source>
</reference>
<sequence>MISFIKGVLIEKDPTALLIDVNGIGYEVFVPMTTFYTLGDIDSQVSLYTHFVVREDAQQLYGFKSKVDKKVFQELIKVNGIGARTAIAILSGMDSKTLLHCIENKDYALLATVPGIGKKTAERLVVEIYDKLLKMANEIYAQTSGTTTTSQDSQAQQAPTSVVLANSIFNESVDALLALGYKQKDAEKMARSAMGDATTAAEVIRKALQGSIKSKG</sequence>
<feature type="chain" id="PRO_1000002452" description="Holliday junction branch migration complex subunit RuvA">
    <location>
        <begin position="1"/>
        <end position="216"/>
    </location>
</feature>
<feature type="region of interest" description="Domain I" evidence="1">
    <location>
        <begin position="1"/>
        <end position="64"/>
    </location>
</feature>
<feature type="region of interest" description="Domain II" evidence="1">
    <location>
        <begin position="65"/>
        <end position="143"/>
    </location>
</feature>
<feature type="region of interest" description="Flexible linker" evidence="1">
    <location>
        <begin position="144"/>
        <end position="163"/>
    </location>
</feature>
<feature type="region of interest" description="Domain III" evidence="1">
    <location>
        <begin position="164"/>
        <end position="216"/>
    </location>
</feature>